<evidence type="ECO:0000255" key="1">
    <source>
        <dbReference type="PROSITE-ProRule" id="PRU00042"/>
    </source>
</evidence>
<evidence type="ECO:0000256" key="2">
    <source>
        <dbReference type="SAM" id="MobiDB-lite"/>
    </source>
</evidence>
<evidence type="ECO:0000269" key="3">
    <source>
    </source>
</evidence>
<evidence type="ECO:0000269" key="4">
    <source>
    </source>
</evidence>
<evidence type="ECO:0000269" key="5">
    <source>
    </source>
</evidence>
<evidence type="ECO:0000305" key="6"/>
<evidence type="ECO:0000312" key="7">
    <source>
        <dbReference type="EMBL" id="AAM29304.1"/>
    </source>
</evidence>
<proteinExistence type="evidence at protein level"/>
<keyword id="KW-0217">Developmental protein</keyword>
<keyword id="KW-0221">Differentiation</keyword>
<keyword id="KW-0238">DNA-binding</keyword>
<keyword id="KW-0469">Meiosis</keyword>
<keyword id="KW-0479">Metal-binding</keyword>
<keyword id="KW-0539">Nucleus</keyword>
<keyword id="KW-1185">Reference proteome</keyword>
<keyword id="KW-0677">Repeat</keyword>
<keyword id="KW-0744">Spermatogenesis</keyword>
<keyword id="KW-0804">Transcription</keyword>
<keyword id="KW-0805">Transcription regulation</keyword>
<keyword id="KW-0862">Zinc</keyword>
<keyword id="KW-0863">Zinc-finger</keyword>
<protein>
    <recommendedName>
        <fullName>Testis-specific zinc finger protein topi</fullName>
    </recommendedName>
    <alternativeName>
        <fullName>Protein matotopetli</fullName>
    </alternativeName>
</protein>
<comment type="function">
    <text evidence="5">Required for male meiotic division and spermatid differentiation. Required for accumulation of aly and comr on chromatin. May function as a transcription factor.</text>
</comment>
<comment type="subunit">
    <text evidence="5">Interacts with comr.</text>
</comment>
<comment type="subcellular location">
    <subcellularLocation>
        <location evidence="5">Nucleus</location>
    </subcellularLocation>
    <text>Binds to chromatin.</text>
</comment>
<comment type="tissue specificity">
    <text evidence="5">Expressed in testis; primary spermatocytes.</text>
</comment>
<accession>Q9VH70</accession>
<accession>Q5BHW6</accession>
<accession>Q8MZ91</accession>
<dbReference type="EMBL" id="AE014297">
    <property type="protein sequence ID" value="AAF54449.1"/>
    <property type="molecule type" value="Genomic_DNA"/>
</dbReference>
<dbReference type="EMBL" id="AY113299">
    <property type="protein sequence ID" value="AAM29304.1"/>
    <property type="molecule type" value="mRNA"/>
</dbReference>
<dbReference type="EMBL" id="BT021458">
    <property type="protein sequence ID" value="AAX33606.1"/>
    <property type="molecule type" value="mRNA"/>
</dbReference>
<dbReference type="RefSeq" id="NP_649945.1">
    <property type="nucleotide sequence ID" value="NM_141688.1"/>
</dbReference>
<dbReference type="SMR" id="Q9VH70"/>
<dbReference type="BioGRID" id="66356">
    <property type="interactions" value="10"/>
</dbReference>
<dbReference type="ComplexPortal" id="CPX-2380">
    <property type="entry name" value="Testis-specific meiotic arrest complex"/>
</dbReference>
<dbReference type="FunCoup" id="Q9VH70">
    <property type="interactions" value="53"/>
</dbReference>
<dbReference type="IntAct" id="Q9VH70">
    <property type="interactions" value="13"/>
</dbReference>
<dbReference type="STRING" id="7227.FBpp0081613"/>
<dbReference type="PaxDb" id="7227-FBpp0081613"/>
<dbReference type="EnsemblMetazoa" id="FBtr0082135">
    <property type="protein sequence ID" value="FBpp0081613"/>
    <property type="gene ID" value="FBgn0037751"/>
</dbReference>
<dbReference type="GeneID" id="41199"/>
<dbReference type="KEGG" id="dme:Dmel_CG8484"/>
<dbReference type="UCSC" id="CG8484-RA">
    <property type="organism name" value="d. melanogaster"/>
</dbReference>
<dbReference type="AGR" id="FB:FBgn0037751"/>
<dbReference type="CTD" id="41199"/>
<dbReference type="FlyBase" id="FBgn0037751">
    <property type="gene designation" value="topi"/>
</dbReference>
<dbReference type="VEuPathDB" id="VectorBase:FBgn0037751"/>
<dbReference type="eggNOG" id="KOG1721">
    <property type="taxonomic scope" value="Eukaryota"/>
</dbReference>
<dbReference type="HOGENOM" id="CLU_341096_0_0_1"/>
<dbReference type="InParanoid" id="Q9VH70"/>
<dbReference type="OMA" id="EHRYTSY"/>
<dbReference type="OrthoDB" id="3437960at2759"/>
<dbReference type="PhylomeDB" id="Q9VH70"/>
<dbReference type="SignaLink" id="Q9VH70"/>
<dbReference type="BioGRID-ORCS" id="41199">
    <property type="hits" value="0 hits in 1 CRISPR screen"/>
</dbReference>
<dbReference type="GenomeRNAi" id="41199"/>
<dbReference type="PRO" id="PR:Q9VH70"/>
<dbReference type="Proteomes" id="UP000000803">
    <property type="component" value="Chromosome 3R"/>
</dbReference>
<dbReference type="Bgee" id="FBgn0037751">
    <property type="expression patterns" value="Expressed in adult Malpighian tubule stellate cell of main segment in Malpighian tubule and 32 other cell types or tissues"/>
</dbReference>
<dbReference type="ExpressionAtlas" id="Q9VH70">
    <property type="expression patterns" value="baseline and differential"/>
</dbReference>
<dbReference type="GO" id="GO:0000785">
    <property type="term" value="C:chromatin"/>
    <property type="evidence" value="ECO:0000314"/>
    <property type="project" value="FlyBase"/>
</dbReference>
<dbReference type="GO" id="GO:0005634">
    <property type="term" value="C:nucleus"/>
    <property type="evidence" value="ECO:0000314"/>
    <property type="project" value="FlyBase"/>
</dbReference>
<dbReference type="GO" id="GO:0090575">
    <property type="term" value="C:RNA polymerase II transcription regulator complex"/>
    <property type="evidence" value="ECO:0000314"/>
    <property type="project" value="FlyBase"/>
</dbReference>
<dbReference type="GO" id="GO:0003700">
    <property type="term" value="F:DNA-binding transcription factor activity"/>
    <property type="evidence" value="ECO:0000318"/>
    <property type="project" value="GO_Central"/>
</dbReference>
<dbReference type="GO" id="GO:0000978">
    <property type="term" value="F:RNA polymerase II cis-regulatory region sequence-specific DNA binding"/>
    <property type="evidence" value="ECO:0000318"/>
    <property type="project" value="GO_Central"/>
</dbReference>
<dbReference type="GO" id="GO:0008270">
    <property type="term" value="F:zinc ion binding"/>
    <property type="evidence" value="ECO:0007669"/>
    <property type="project" value="UniProtKB-KW"/>
</dbReference>
<dbReference type="GO" id="GO:0030154">
    <property type="term" value="P:cell differentiation"/>
    <property type="evidence" value="ECO:0007669"/>
    <property type="project" value="UniProtKB-KW"/>
</dbReference>
<dbReference type="GO" id="GO:0007140">
    <property type="term" value="P:male meiotic nuclear division"/>
    <property type="evidence" value="ECO:0000315"/>
    <property type="project" value="FlyBase"/>
</dbReference>
<dbReference type="GO" id="GO:0045944">
    <property type="term" value="P:positive regulation of transcription by RNA polymerase II"/>
    <property type="evidence" value="ECO:0000315"/>
    <property type="project" value="FlyBase"/>
</dbReference>
<dbReference type="GO" id="GO:0006357">
    <property type="term" value="P:regulation of transcription by RNA polymerase II"/>
    <property type="evidence" value="ECO:0000318"/>
    <property type="project" value="GO_Central"/>
</dbReference>
<dbReference type="GO" id="GO:0007283">
    <property type="term" value="P:spermatogenesis"/>
    <property type="evidence" value="ECO:0000315"/>
    <property type="project" value="FlyBase"/>
</dbReference>
<dbReference type="FunFam" id="3.30.160.60:FF:001102">
    <property type="entry name" value="Transcription factor IIIA"/>
    <property type="match status" value="1"/>
</dbReference>
<dbReference type="FunFam" id="3.30.160.60:FF:000100">
    <property type="entry name" value="Zinc finger 45-like"/>
    <property type="match status" value="1"/>
</dbReference>
<dbReference type="FunFam" id="3.30.160.60:FF:000446">
    <property type="entry name" value="Zinc finger protein"/>
    <property type="match status" value="1"/>
</dbReference>
<dbReference type="FunFam" id="3.30.160.60:FF:001498">
    <property type="entry name" value="Zinc finger protein 404"/>
    <property type="match status" value="1"/>
</dbReference>
<dbReference type="FunFam" id="3.30.160.60:FF:000202">
    <property type="entry name" value="Zinc finger protein 574"/>
    <property type="match status" value="1"/>
</dbReference>
<dbReference type="Gene3D" id="3.30.160.60">
    <property type="entry name" value="Classic Zinc Finger"/>
    <property type="match status" value="7"/>
</dbReference>
<dbReference type="InterPro" id="IPR036236">
    <property type="entry name" value="Znf_C2H2_sf"/>
</dbReference>
<dbReference type="InterPro" id="IPR013087">
    <property type="entry name" value="Znf_C2H2_type"/>
</dbReference>
<dbReference type="PANTHER" id="PTHR24379:SF127">
    <property type="entry name" value="BLOODY FINGERS-RELATED"/>
    <property type="match status" value="1"/>
</dbReference>
<dbReference type="PANTHER" id="PTHR24379">
    <property type="entry name" value="KRAB AND ZINC FINGER DOMAIN-CONTAINING"/>
    <property type="match status" value="1"/>
</dbReference>
<dbReference type="Pfam" id="PF00096">
    <property type="entry name" value="zf-C2H2"/>
    <property type="match status" value="3"/>
</dbReference>
<dbReference type="SMART" id="SM00355">
    <property type="entry name" value="ZnF_C2H2"/>
    <property type="match status" value="10"/>
</dbReference>
<dbReference type="SUPFAM" id="SSF57667">
    <property type="entry name" value="beta-beta-alpha zinc fingers"/>
    <property type="match status" value="4"/>
</dbReference>
<dbReference type="PROSITE" id="PS00028">
    <property type="entry name" value="ZINC_FINGER_C2H2_1"/>
    <property type="match status" value="10"/>
</dbReference>
<dbReference type="PROSITE" id="PS50157">
    <property type="entry name" value="ZINC_FINGER_C2H2_2"/>
    <property type="match status" value="8"/>
</dbReference>
<sequence>MKVKVSGEYTLAEIEVELDQQLTPDDLQPGATVLATNESTGGLERIVSHEELSRFFAVGPAGALPMPTDVVVERTLADPAFKQILQEADGKKGFDPQAEQMKIRDFLAGVTSSKMTTEQSVFHGSRSNSSASTVNRIKCPTCLVQFDAVAFQNHSCEAKPIEVAVPQQEKPHLVPTVSAPPAPLSKPASERVIRENQVRLRRYIKDEMKYDLATGIESSRKNAAKGPNECTMCDRKFVHASGLVRHMEKHALDLIPSQTSEQPHTIPAAGLHVVVKCNSCGRIFYDPQVAFRHGLIHDSEHSTMRQSPMTQVPSNRADFNELLLDGEMLIDNDPAFATSNQNTNPPKKEMFSSLILGSVLQCEFCEYIFADIAELLVHSASHVAERRFECTACDIQMNTAKEASIHFQTDCIFMREAIRSLNVTLSRYFVCNVCELKFANTDLLQEHRCTSFHYFPRLNENGKKLLLPCDFCDVNFEFAHDFLAHSEEKHLNKKKREKETRNTGAGRIRQYLCDICGKSYTQSSHLWQHLRFHQGVKPFVCQEENCDRKFTIRPDLNDHIRKCHTGERPYLCLVCGKRFLTGSVFYQHRLIHRGERRYECEECGKRFYRADALKNHQRIHTGEKPYSCLFCTKTFRQRGDRDKHIRARHSHLDANSRLMMQMQKFQLETAAAQKAQSHNPEQQDNDVAGGASTSDVPSGSGFMSTEPSVAEMQYSITPEQQEEMVCVPIDEVNNSFFMSHYMQAVPMEEDGSGQHIIVFEQPGQNMDMMSIYDQQQVGEPMHESGVPKRPAEENARVVVVKNNPTKPIFSDTYL</sequence>
<gene>
    <name type="primary">topi</name>
    <name type="ORF">CG8484</name>
</gene>
<organism evidence="7">
    <name type="scientific">Drosophila melanogaster</name>
    <name type="common">Fruit fly</name>
    <dbReference type="NCBI Taxonomy" id="7227"/>
    <lineage>
        <taxon>Eukaryota</taxon>
        <taxon>Metazoa</taxon>
        <taxon>Ecdysozoa</taxon>
        <taxon>Arthropoda</taxon>
        <taxon>Hexapoda</taxon>
        <taxon>Insecta</taxon>
        <taxon>Pterygota</taxon>
        <taxon>Neoptera</taxon>
        <taxon>Endopterygota</taxon>
        <taxon>Diptera</taxon>
        <taxon>Brachycera</taxon>
        <taxon>Muscomorpha</taxon>
        <taxon>Ephydroidea</taxon>
        <taxon>Drosophilidae</taxon>
        <taxon>Drosophila</taxon>
        <taxon>Sophophora</taxon>
    </lineage>
</organism>
<reference evidence="6" key="1">
    <citation type="journal article" date="2000" name="Science">
        <title>The genome sequence of Drosophila melanogaster.</title>
        <authorList>
            <person name="Adams M.D."/>
            <person name="Celniker S.E."/>
            <person name="Holt R.A."/>
            <person name="Evans C.A."/>
            <person name="Gocayne J.D."/>
            <person name="Amanatides P.G."/>
            <person name="Scherer S.E."/>
            <person name="Li P.W."/>
            <person name="Hoskins R.A."/>
            <person name="Galle R.F."/>
            <person name="George R.A."/>
            <person name="Lewis S.E."/>
            <person name="Richards S."/>
            <person name="Ashburner M."/>
            <person name="Henderson S.N."/>
            <person name="Sutton G.G."/>
            <person name="Wortman J.R."/>
            <person name="Yandell M.D."/>
            <person name="Zhang Q."/>
            <person name="Chen L.X."/>
            <person name="Brandon R.C."/>
            <person name="Rogers Y.-H.C."/>
            <person name="Blazej R.G."/>
            <person name="Champe M."/>
            <person name="Pfeiffer B.D."/>
            <person name="Wan K.H."/>
            <person name="Doyle C."/>
            <person name="Baxter E.G."/>
            <person name="Helt G."/>
            <person name="Nelson C.R."/>
            <person name="Miklos G.L.G."/>
            <person name="Abril J.F."/>
            <person name="Agbayani A."/>
            <person name="An H.-J."/>
            <person name="Andrews-Pfannkoch C."/>
            <person name="Baldwin D."/>
            <person name="Ballew R.M."/>
            <person name="Basu A."/>
            <person name="Baxendale J."/>
            <person name="Bayraktaroglu L."/>
            <person name="Beasley E.M."/>
            <person name="Beeson K.Y."/>
            <person name="Benos P.V."/>
            <person name="Berman B.P."/>
            <person name="Bhandari D."/>
            <person name="Bolshakov S."/>
            <person name="Borkova D."/>
            <person name="Botchan M.R."/>
            <person name="Bouck J."/>
            <person name="Brokstein P."/>
            <person name="Brottier P."/>
            <person name="Burtis K.C."/>
            <person name="Busam D.A."/>
            <person name="Butler H."/>
            <person name="Cadieu E."/>
            <person name="Center A."/>
            <person name="Chandra I."/>
            <person name="Cherry J.M."/>
            <person name="Cawley S."/>
            <person name="Dahlke C."/>
            <person name="Davenport L.B."/>
            <person name="Davies P."/>
            <person name="de Pablos B."/>
            <person name="Delcher A."/>
            <person name="Deng Z."/>
            <person name="Mays A.D."/>
            <person name="Dew I."/>
            <person name="Dietz S.M."/>
            <person name="Dodson K."/>
            <person name="Doup L.E."/>
            <person name="Downes M."/>
            <person name="Dugan-Rocha S."/>
            <person name="Dunkov B.C."/>
            <person name="Dunn P."/>
            <person name="Durbin K.J."/>
            <person name="Evangelista C.C."/>
            <person name="Ferraz C."/>
            <person name="Ferriera S."/>
            <person name="Fleischmann W."/>
            <person name="Fosler C."/>
            <person name="Gabrielian A.E."/>
            <person name="Garg N.S."/>
            <person name="Gelbart W.M."/>
            <person name="Glasser K."/>
            <person name="Glodek A."/>
            <person name="Gong F."/>
            <person name="Gorrell J.H."/>
            <person name="Gu Z."/>
            <person name="Guan P."/>
            <person name="Harris M."/>
            <person name="Harris N.L."/>
            <person name="Harvey D.A."/>
            <person name="Heiman T.J."/>
            <person name="Hernandez J.R."/>
            <person name="Houck J."/>
            <person name="Hostin D."/>
            <person name="Houston K.A."/>
            <person name="Howland T.J."/>
            <person name="Wei M.-H."/>
            <person name="Ibegwam C."/>
            <person name="Jalali M."/>
            <person name="Kalush F."/>
            <person name="Karpen G.H."/>
            <person name="Ke Z."/>
            <person name="Kennison J.A."/>
            <person name="Ketchum K.A."/>
            <person name="Kimmel B.E."/>
            <person name="Kodira C.D."/>
            <person name="Kraft C.L."/>
            <person name="Kravitz S."/>
            <person name="Kulp D."/>
            <person name="Lai Z."/>
            <person name="Lasko P."/>
            <person name="Lei Y."/>
            <person name="Levitsky A.A."/>
            <person name="Li J.H."/>
            <person name="Li Z."/>
            <person name="Liang Y."/>
            <person name="Lin X."/>
            <person name="Liu X."/>
            <person name="Mattei B."/>
            <person name="McIntosh T.C."/>
            <person name="McLeod M.P."/>
            <person name="McPherson D."/>
            <person name="Merkulov G."/>
            <person name="Milshina N.V."/>
            <person name="Mobarry C."/>
            <person name="Morris J."/>
            <person name="Moshrefi A."/>
            <person name="Mount S.M."/>
            <person name="Moy M."/>
            <person name="Murphy B."/>
            <person name="Murphy L."/>
            <person name="Muzny D.M."/>
            <person name="Nelson D.L."/>
            <person name="Nelson D.R."/>
            <person name="Nelson K.A."/>
            <person name="Nixon K."/>
            <person name="Nusskern D.R."/>
            <person name="Pacleb J.M."/>
            <person name="Palazzolo M."/>
            <person name="Pittman G.S."/>
            <person name="Pan S."/>
            <person name="Pollard J."/>
            <person name="Puri V."/>
            <person name="Reese M.G."/>
            <person name="Reinert K."/>
            <person name="Remington K."/>
            <person name="Saunders R.D.C."/>
            <person name="Scheeler F."/>
            <person name="Shen H."/>
            <person name="Shue B.C."/>
            <person name="Siden-Kiamos I."/>
            <person name="Simpson M."/>
            <person name="Skupski M.P."/>
            <person name="Smith T.J."/>
            <person name="Spier E."/>
            <person name="Spradling A.C."/>
            <person name="Stapleton M."/>
            <person name="Strong R."/>
            <person name="Sun E."/>
            <person name="Svirskas R."/>
            <person name="Tector C."/>
            <person name="Turner R."/>
            <person name="Venter E."/>
            <person name="Wang A.H."/>
            <person name="Wang X."/>
            <person name="Wang Z.-Y."/>
            <person name="Wassarman D.A."/>
            <person name="Weinstock G.M."/>
            <person name="Weissenbach J."/>
            <person name="Williams S.M."/>
            <person name="Woodage T."/>
            <person name="Worley K.C."/>
            <person name="Wu D."/>
            <person name="Yang S."/>
            <person name="Yao Q.A."/>
            <person name="Ye J."/>
            <person name="Yeh R.-F."/>
            <person name="Zaveri J.S."/>
            <person name="Zhan M."/>
            <person name="Zhang G."/>
            <person name="Zhao Q."/>
            <person name="Zheng L."/>
            <person name="Zheng X.H."/>
            <person name="Zhong F.N."/>
            <person name="Zhong W."/>
            <person name="Zhou X."/>
            <person name="Zhu S.C."/>
            <person name="Zhu X."/>
            <person name="Smith H.O."/>
            <person name="Gibbs R.A."/>
            <person name="Myers E.W."/>
            <person name="Rubin G.M."/>
            <person name="Venter J.C."/>
        </authorList>
    </citation>
    <scope>NUCLEOTIDE SEQUENCE [LARGE SCALE GENOMIC DNA]</scope>
    <source>
        <strain evidence="3">Berkeley</strain>
    </source>
</reference>
<reference key="2">
    <citation type="journal article" date="2002" name="Genome Biol.">
        <title>Annotation of the Drosophila melanogaster euchromatic genome: a systematic review.</title>
        <authorList>
            <person name="Misra S."/>
            <person name="Crosby M.A."/>
            <person name="Mungall C.J."/>
            <person name="Matthews B.B."/>
            <person name="Campbell K.S."/>
            <person name="Hradecky P."/>
            <person name="Huang Y."/>
            <person name="Kaminker J.S."/>
            <person name="Millburn G.H."/>
            <person name="Prochnik S.E."/>
            <person name="Smith C.D."/>
            <person name="Tupy J.L."/>
            <person name="Whitfield E.J."/>
            <person name="Bayraktaroglu L."/>
            <person name="Berman B.P."/>
            <person name="Bettencourt B.R."/>
            <person name="Celniker S.E."/>
            <person name="de Grey A.D.N.J."/>
            <person name="Drysdale R.A."/>
            <person name="Harris N.L."/>
            <person name="Richter J."/>
            <person name="Russo S."/>
            <person name="Schroeder A.J."/>
            <person name="Shu S.Q."/>
            <person name="Stapleton M."/>
            <person name="Yamada C."/>
            <person name="Ashburner M."/>
            <person name="Gelbart W.M."/>
            <person name="Rubin G.M."/>
            <person name="Lewis S.E."/>
        </authorList>
    </citation>
    <scope>GENOME REANNOTATION</scope>
    <source>
        <strain>Berkeley</strain>
    </source>
</reference>
<reference evidence="6" key="3">
    <citation type="journal article" date="2002" name="Genome Biol.">
        <title>A Drosophila full-length cDNA resource.</title>
        <authorList>
            <person name="Stapleton M."/>
            <person name="Carlson J.W."/>
            <person name="Brokstein P."/>
            <person name="Yu C."/>
            <person name="Champe M."/>
            <person name="George R.A."/>
            <person name="Guarin H."/>
            <person name="Kronmiller B."/>
            <person name="Pacleb J.M."/>
            <person name="Park S."/>
            <person name="Wan K.H."/>
            <person name="Rubin G.M."/>
            <person name="Celniker S.E."/>
        </authorList>
    </citation>
    <scope>NUCLEOTIDE SEQUENCE [LARGE SCALE MRNA]</scope>
    <source>
        <strain evidence="4">Berkeley</strain>
        <tissue evidence="4">Testis</tissue>
    </source>
</reference>
<reference key="4">
    <citation type="submission" date="2005-03" db="EMBL/GenBank/DDBJ databases">
        <authorList>
            <person name="Stapleton M."/>
            <person name="Carlson J.W."/>
            <person name="Chavez C."/>
            <person name="Frise E."/>
            <person name="George R.A."/>
            <person name="Pacleb J.M."/>
            <person name="Park S."/>
            <person name="Wan K.H."/>
            <person name="Yu C."/>
            <person name="Rubin G.M."/>
            <person name="Celniker S.E."/>
        </authorList>
    </citation>
    <scope>NUCLEOTIDE SEQUENCE [LARGE SCALE MRNA]</scope>
    <source>
        <strain>Berkeley</strain>
        <tissue>Testis</tissue>
    </source>
</reference>
<reference key="5">
    <citation type="journal article" date="2004" name="Development">
        <title>Regulation of transcription of meiotic cell cycle and terminal differentiation genes by the testis-specific Zn-finger protein matotopetli.</title>
        <authorList>
            <person name="Perezgasga L."/>
            <person name="Jiang J."/>
            <person name="Bolival B. Jr."/>
            <person name="Hiller M."/>
            <person name="Benson E."/>
            <person name="Fuller M.T."/>
            <person name="White-Cooper H."/>
        </authorList>
    </citation>
    <scope>FUNCTION</scope>
    <scope>SUBCELLULAR LOCATION</scope>
    <scope>INTERACTION WITH COMT</scope>
    <scope>TISSUE SPECIFICITY</scope>
</reference>
<feature type="chain" id="PRO_0000046929" description="Testis-specific zinc finger protein topi">
    <location>
        <begin position="1"/>
        <end position="814"/>
    </location>
</feature>
<feature type="zinc finger region" description="C2H2-type 1" evidence="1">
    <location>
        <begin position="228"/>
        <end position="250"/>
    </location>
</feature>
<feature type="zinc finger region" description="C2H2-type 2" evidence="1">
    <location>
        <begin position="275"/>
        <end position="297"/>
    </location>
</feature>
<feature type="zinc finger region" description="C2H2-type 3" evidence="1">
    <location>
        <begin position="360"/>
        <end position="382"/>
    </location>
</feature>
<feature type="zinc finger region" description="C2H2-type 4" evidence="1">
    <location>
        <begin position="429"/>
        <end position="453"/>
    </location>
</feature>
<feature type="zinc finger region" description="C2H2-type 5" evidence="1">
    <location>
        <begin position="467"/>
        <end position="490"/>
    </location>
</feature>
<feature type="zinc finger region" description="C2H2-type 6" evidence="1">
    <location>
        <begin position="511"/>
        <end position="533"/>
    </location>
</feature>
<feature type="zinc finger region" description="C2H2-type 7" evidence="1">
    <location>
        <begin position="539"/>
        <end position="564"/>
    </location>
</feature>
<feature type="zinc finger region" description="C2H2-type 8" evidence="1">
    <location>
        <begin position="570"/>
        <end position="592"/>
    </location>
</feature>
<feature type="zinc finger region" description="C2H2-type 9" evidence="1">
    <location>
        <begin position="598"/>
        <end position="620"/>
    </location>
</feature>
<feature type="zinc finger region" description="C2H2-type 10" evidence="1">
    <location>
        <begin position="626"/>
        <end position="649"/>
    </location>
</feature>
<feature type="region of interest" description="Disordered" evidence="2">
    <location>
        <begin position="669"/>
        <end position="705"/>
    </location>
</feature>
<feature type="compositionally biased region" description="Polar residues" evidence="2">
    <location>
        <begin position="691"/>
        <end position="705"/>
    </location>
</feature>
<feature type="sequence conflict" description="In Ref. 3 and 4." evidence="6" ref="3 4">
    <original>I</original>
    <variation>V</variation>
    <location>
        <position position="161"/>
    </location>
</feature>
<feature type="sequence conflict" description="In Ref. 3 and 4." evidence="6" ref="3 4">
    <original>K</original>
    <variation>E</variation>
    <location>
        <position position="347"/>
    </location>
</feature>
<feature type="sequence conflict" description="In Ref. 3; AAM29304." evidence="6" ref="3">
    <original>V</original>
    <variation>A</variation>
    <location>
        <position position="383"/>
    </location>
</feature>
<name>TOPI_DROME</name>